<organism>
    <name type="scientific">Mus musculus</name>
    <name type="common">Mouse</name>
    <dbReference type="NCBI Taxonomy" id="10090"/>
    <lineage>
        <taxon>Eukaryota</taxon>
        <taxon>Metazoa</taxon>
        <taxon>Chordata</taxon>
        <taxon>Craniata</taxon>
        <taxon>Vertebrata</taxon>
        <taxon>Euteleostomi</taxon>
        <taxon>Mammalia</taxon>
        <taxon>Eutheria</taxon>
        <taxon>Euarchontoglires</taxon>
        <taxon>Glires</taxon>
        <taxon>Rodentia</taxon>
        <taxon>Myomorpha</taxon>
        <taxon>Muroidea</taxon>
        <taxon>Muridae</taxon>
        <taxon>Murinae</taxon>
        <taxon>Mus</taxon>
        <taxon>Mus</taxon>
    </lineage>
</organism>
<gene>
    <name type="primary">Hoxd13</name>
    <name type="synonym">Hox-4.8</name>
</gene>
<name>HXD13_MOUSE</name>
<dbReference type="EMBL" id="X99291">
    <property type="protein sequence ID" value="CAA67675.1"/>
    <property type="molecule type" value="mRNA"/>
</dbReference>
<dbReference type="EMBL" id="AL928644">
    <property type="status" value="NOT_ANNOTATED_CDS"/>
    <property type="molecule type" value="Genomic_DNA"/>
</dbReference>
<dbReference type="EMBL" id="BC109143">
    <property type="status" value="NOT_ANNOTATED_CDS"/>
    <property type="molecule type" value="mRNA"/>
</dbReference>
<dbReference type="EMBL" id="BC109144">
    <property type="status" value="NOT_ANNOTATED_CDS"/>
    <property type="molecule type" value="mRNA"/>
</dbReference>
<dbReference type="EMBL" id="S80553">
    <property type="protein sequence ID" value="AAB21366.2"/>
    <property type="molecule type" value="Genomic_DNA"/>
</dbReference>
<dbReference type="CCDS" id="CCDS16139.1"/>
<dbReference type="PIR" id="A56563">
    <property type="entry name" value="A56563"/>
</dbReference>
<dbReference type="RefSeq" id="NP_032301.2">
    <property type="nucleotide sequence ID" value="NM_008275.4"/>
</dbReference>
<dbReference type="SMR" id="P70217"/>
<dbReference type="BioGRID" id="200395">
    <property type="interactions" value="7"/>
</dbReference>
<dbReference type="FunCoup" id="P70217">
    <property type="interactions" value="1266"/>
</dbReference>
<dbReference type="IntAct" id="P70217">
    <property type="interactions" value="7"/>
</dbReference>
<dbReference type="MINT" id="P70217"/>
<dbReference type="STRING" id="10090.ENSMUSP00000001872"/>
<dbReference type="GlyGen" id="P70217">
    <property type="glycosylation" value="1 site, 1 O-linked glycan (1 site)"/>
</dbReference>
<dbReference type="PhosphoSitePlus" id="P70217"/>
<dbReference type="PaxDb" id="10090-ENSMUSP00000001872"/>
<dbReference type="ProteomicsDB" id="267027"/>
<dbReference type="Antibodypedia" id="33902">
    <property type="antibodies" value="250 antibodies from 32 providers"/>
</dbReference>
<dbReference type="DNASU" id="15433"/>
<dbReference type="Ensembl" id="ENSMUST00000001872.5">
    <property type="protein sequence ID" value="ENSMUSP00000001872.5"/>
    <property type="gene ID" value="ENSMUSG00000001819.5"/>
</dbReference>
<dbReference type="GeneID" id="15433"/>
<dbReference type="KEGG" id="mmu:15433"/>
<dbReference type="UCSC" id="uc008kdu.2">
    <property type="organism name" value="mouse"/>
</dbReference>
<dbReference type="AGR" id="MGI:96205"/>
<dbReference type="CTD" id="3239"/>
<dbReference type="MGI" id="MGI:96205">
    <property type="gene designation" value="Hoxd13"/>
</dbReference>
<dbReference type="VEuPathDB" id="HostDB:ENSMUSG00000001819"/>
<dbReference type="eggNOG" id="KOG0487">
    <property type="taxonomic scope" value="Eukaryota"/>
</dbReference>
<dbReference type="GeneTree" id="ENSGT00940000161457"/>
<dbReference type="HOGENOM" id="CLU_059940_2_0_1"/>
<dbReference type="InParanoid" id="P70217"/>
<dbReference type="OMA" id="KAASWEM"/>
<dbReference type="OrthoDB" id="6159439at2759"/>
<dbReference type="PhylomeDB" id="P70217"/>
<dbReference type="TreeFam" id="TF330813"/>
<dbReference type="BioGRID-ORCS" id="15433">
    <property type="hits" value="4 hits in 80 CRISPR screens"/>
</dbReference>
<dbReference type="PRO" id="PR:P70217"/>
<dbReference type="Proteomes" id="UP000000589">
    <property type="component" value="Chromosome 2"/>
</dbReference>
<dbReference type="RNAct" id="P70217">
    <property type="molecule type" value="protein"/>
</dbReference>
<dbReference type="Bgee" id="ENSMUSG00000001819">
    <property type="expression patterns" value="Expressed in undifferentiated genital tubercle and 130 other cell types or tissues"/>
</dbReference>
<dbReference type="GO" id="GO:0005654">
    <property type="term" value="C:nucleoplasm"/>
    <property type="evidence" value="ECO:0007669"/>
    <property type="project" value="Ensembl"/>
</dbReference>
<dbReference type="GO" id="GO:0005634">
    <property type="term" value="C:nucleus"/>
    <property type="evidence" value="ECO:0000314"/>
    <property type="project" value="MGI"/>
</dbReference>
<dbReference type="GO" id="GO:0003682">
    <property type="term" value="F:chromatin binding"/>
    <property type="evidence" value="ECO:0000314"/>
    <property type="project" value="MGI"/>
</dbReference>
<dbReference type="GO" id="GO:0000987">
    <property type="term" value="F:cis-regulatory region sequence-specific DNA binding"/>
    <property type="evidence" value="ECO:0000314"/>
    <property type="project" value="MGI"/>
</dbReference>
<dbReference type="GO" id="GO:0003677">
    <property type="term" value="F:DNA binding"/>
    <property type="evidence" value="ECO:0000314"/>
    <property type="project" value="MGI"/>
</dbReference>
<dbReference type="GO" id="GO:0001228">
    <property type="term" value="F:DNA-binding transcription activator activity, RNA polymerase II-specific"/>
    <property type="evidence" value="ECO:0000314"/>
    <property type="project" value="NTNU_SB"/>
</dbReference>
<dbReference type="GO" id="GO:0003700">
    <property type="term" value="F:DNA-binding transcription factor activity"/>
    <property type="evidence" value="ECO:0000314"/>
    <property type="project" value="UniProtKB"/>
</dbReference>
<dbReference type="GO" id="GO:0000978">
    <property type="term" value="F:RNA polymerase II cis-regulatory region sequence-specific DNA binding"/>
    <property type="evidence" value="ECO:0000314"/>
    <property type="project" value="NTNU_SB"/>
</dbReference>
<dbReference type="GO" id="GO:0009952">
    <property type="term" value="P:anterior/posterior pattern specification"/>
    <property type="evidence" value="ECO:0000315"/>
    <property type="project" value="MGI"/>
</dbReference>
<dbReference type="GO" id="GO:0060602">
    <property type="term" value="P:branch elongation of an epithelium"/>
    <property type="evidence" value="ECO:0000315"/>
    <property type="project" value="MGI"/>
</dbReference>
<dbReference type="GO" id="GO:0042733">
    <property type="term" value="P:embryonic digit morphogenesis"/>
    <property type="evidence" value="ECO:0000316"/>
    <property type="project" value="MGI"/>
</dbReference>
<dbReference type="GO" id="GO:0048619">
    <property type="term" value="P:embryonic hindgut morphogenesis"/>
    <property type="evidence" value="ECO:0007669"/>
    <property type="project" value="Ensembl"/>
</dbReference>
<dbReference type="GO" id="GO:0030326">
    <property type="term" value="P:embryonic limb morphogenesis"/>
    <property type="evidence" value="ECO:0000315"/>
    <property type="project" value="MGI"/>
</dbReference>
<dbReference type="GO" id="GO:0022612">
    <property type="term" value="P:gland morphogenesis"/>
    <property type="evidence" value="ECO:0000315"/>
    <property type="project" value="MGI"/>
</dbReference>
<dbReference type="GO" id="GO:0035108">
    <property type="term" value="P:limb morphogenesis"/>
    <property type="evidence" value="ECO:0000315"/>
    <property type="project" value="MGI"/>
</dbReference>
<dbReference type="GO" id="GO:0030539">
    <property type="term" value="P:male genitalia development"/>
    <property type="evidence" value="ECO:0000315"/>
    <property type="project" value="MGI"/>
</dbReference>
<dbReference type="GO" id="GO:0060571">
    <property type="term" value="P:morphogenesis of an epithelial fold"/>
    <property type="evidence" value="ECO:0000315"/>
    <property type="project" value="MGI"/>
</dbReference>
<dbReference type="GO" id="GO:0007389">
    <property type="term" value="P:pattern specification process"/>
    <property type="evidence" value="ECO:0000315"/>
    <property type="project" value="MGI"/>
</dbReference>
<dbReference type="GO" id="GO:0045944">
    <property type="term" value="P:positive regulation of transcription by RNA polymerase II"/>
    <property type="evidence" value="ECO:0000314"/>
    <property type="project" value="MGI"/>
</dbReference>
<dbReference type="GO" id="GO:0060527">
    <property type="term" value="P:prostate epithelial cord arborization involved in prostate glandular acinus morphogenesis"/>
    <property type="evidence" value="ECO:0000316"/>
    <property type="project" value="MGI"/>
</dbReference>
<dbReference type="GO" id="GO:0060687">
    <property type="term" value="P:regulation of branching involved in prostate gland morphogenesis"/>
    <property type="evidence" value="ECO:0000315"/>
    <property type="project" value="MGI"/>
</dbReference>
<dbReference type="GO" id="GO:0042127">
    <property type="term" value="P:regulation of cell population proliferation"/>
    <property type="evidence" value="ECO:0000315"/>
    <property type="project" value="MGI"/>
</dbReference>
<dbReference type="GO" id="GO:0033574">
    <property type="term" value="P:response to testosterone"/>
    <property type="evidence" value="ECO:0007669"/>
    <property type="project" value="Ensembl"/>
</dbReference>
<dbReference type="GO" id="GO:0001501">
    <property type="term" value="P:skeletal system development"/>
    <property type="evidence" value="ECO:0000315"/>
    <property type="project" value="MGI"/>
</dbReference>
<dbReference type="GO" id="GO:0006366">
    <property type="term" value="P:transcription by RNA polymerase II"/>
    <property type="evidence" value="ECO:0000314"/>
    <property type="project" value="MGI"/>
</dbReference>
<dbReference type="CDD" id="cd00086">
    <property type="entry name" value="homeodomain"/>
    <property type="match status" value="1"/>
</dbReference>
<dbReference type="FunFam" id="1.10.10.60:FF:000084">
    <property type="entry name" value="Homeobox protein Hox-D13"/>
    <property type="match status" value="1"/>
</dbReference>
<dbReference type="Gene3D" id="1.10.10.60">
    <property type="entry name" value="Homeodomain-like"/>
    <property type="match status" value="1"/>
</dbReference>
<dbReference type="InterPro" id="IPR051003">
    <property type="entry name" value="AP_axis_regulatory_Homeobox"/>
</dbReference>
<dbReference type="InterPro" id="IPR001356">
    <property type="entry name" value="HD"/>
</dbReference>
<dbReference type="InterPro" id="IPR017970">
    <property type="entry name" value="Homeobox_CS"/>
</dbReference>
<dbReference type="InterPro" id="IPR009057">
    <property type="entry name" value="Homeodomain-like_sf"/>
</dbReference>
<dbReference type="InterPro" id="IPR022067">
    <property type="entry name" value="HoxA13_N"/>
</dbReference>
<dbReference type="PANTHER" id="PTHR45804:SF4">
    <property type="entry name" value="HOMEOBOX PROTEIN HOX-D13"/>
    <property type="match status" value="1"/>
</dbReference>
<dbReference type="PANTHER" id="PTHR45804">
    <property type="entry name" value="SEGMENTATION PROTEIN FUSHI TARAZU-LIKE PROTEIN"/>
    <property type="match status" value="1"/>
</dbReference>
<dbReference type="Pfam" id="PF00046">
    <property type="entry name" value="Homeodomain"/>
    <property type="match status" value="1"/>
</dbReference>
<dbReference type="Pfam" id="PF12284">
    <property type="entry name" value="HoxA13_N"/>
    <property type="match status" value="1"/>
</dbReference>
<dbReference type="SMART" id="SM00389">
    <property type="entry name" value="HOX"/>
    <property type="match status" value="1"/>
</dbReference>
<dbReference type="SUPFAM" id="SSF46689">
    <property type="entry name" value="Homeodomain-like"/>
    <property type="match status" value="1"/>
</dbReference>
<dbReference type="PROSITE" id="PS00027">
    <property type="entry name" value="HOMEOBOX_1"/>
    <property type="match status" value="1"/>
</dbReference>
<dbReference type="PROSITE" id="PS50071">
    <property type="entry name" value="HOMEOBOX_2"/>
    <property type="match status" value="1"/>
</dbReference>
<reference key="1">
    <citation type="journal article" date="1996" name="EMBO J.">
        <title>Function of the Evx-2 gene in the morphogenesis of vertebrate limbs.</title>
        <authorList>
            <person name="Herault Y."/>
            <person name="Hraba-Reveney S."/>
            <person name="van der Hoeven F."/>
            <person name="Duboule D."/>
        </authorList>
    </citation>
    <scope>NUCLEOTIDE SEQUENCE [MRNA]</scope>
</reference>
<reference key="2">
    <citation type="journal article" date="2009" name="PLoS Biol.">
        <title>Lineage-specific biology revealed by a finished genome assembly of the mouse.</title>
        <authorList>
            <person name="Church D.M."/>
            <person name="Goodstadt L."/>
            <person name="Hillier L.W."/>
            <person name="Zody M.C."/>
            <person name="Goldstein S."/>
            <person name="She X."/>
            <person name="Bult C.J."/>
            <person name="Agarwala R."/>
            <person name="Cherry J.L."/>
            <person name="DiCuccio M."/>
            <person name="Hlavina W."/>
            <person name="Kapustin Y."/>
            <person name="Meric P."/>
            <person name="Maglott D."/>
            <person name="Birtle Z."/>
            <person name="Marques A.C."/>
            <person name="Graves T."/>
            <person name="Zhou S."/>
            <person name="Teague B."/>
            <person name="Potamousis K."/>
            <person name="Churas C."/>
            <person name="Place M."/>
            <person name="Herschleb J."/>
            <person name="Runnheim R."/>
            <person name="Forrest D."/>
            <person name="Amos-Landgraf J."/>
            <person name="Schwartz D.C."/>
            <person name="Cheng Z."/>
            <person name="Lindblad-Toh K."/>
            <person name="Eichler E.E."/>
            <person name="Ponting C.P."/>
        </authorList>
    </citation>
    <scope>NUCLEOTIDE SEQUENCE [LARGE SCALE GENOMIC DNA]</scope>
    <source>
        <strain>C57BL/6J</strain>
    </source>
</reference>
<reference key="3">
    <citation type="journal article" date="2004" name="Genome Res.">
        <title>The status, quality, and expansion of the NIH full-length cDNA project: the Mammalian Gene Collection (MGC).</title>
        <authorList>
            <consortium name="The MGC Project Team"/>
        </authorList>
    </citation>
    <scope>NUCLEOTIDE SEQUENCE [LARGE SCALE MRNA] OF 3-339</scope>
</reference>
<reference key="4">
    <citation type="journal article" date="1991" name="Mech. Dev.">
        <title>The Hox-4.8 gene is localized at the 5' extremity of the Hox-4 complex and is expressed in the most posterior parts of the body during development.</title>
        <authorList>
            <person name="Dolle P."/>
            <person name="Izpisua-Belmonte J.-C."/>
            <person name="Boncinelli E."/>
            <person name="Duboule D."/>
        </authorList>
    </citation>
    <scope>NUCLEOTIDE SEQUENCE [GENOMIC DNA] OF 258-339</scope>
</reference>
<reference key="5">
    <citation type="journal article" date="2013" name="Genome Res.">
        <title>Distinct global shifts in genomic binding profiles of limb malformation-associated HOXD13 mutations.</title>
        <authorList>
            <person name="Ibrahim D.M."/>
            <person name="Hansen P."/>
            <person name="Roedelsperger C."/>
            <person name="Stiege A.C."/>
            <person name="Doelken S.C."/>
            <person name="Horn D."/>
            <person name="Jaeger M."/>
            <person name="Janetzki C."/>
            <person name="Krawitz P."/>
            <person name="Leschik G."/>
            <person name="Wagner F."/>
            <person name="Scheuer T."/>
            <person name="Schmidt-von Kegler M."/>
            <person name="Seemann P."/>
            <person name="Timmermann B."/>
            <person name="Robinson P.N."/>
            <person name="Mundlos S."/>
            <person name="Hecht J."/>
        </authorList>
    </citation>
    <scope>FUNCTION</scope>
    <scope>DNA-BINDING</scope>
    <scope>SUBCELLULAR LOCATION</scope>
    <scope>MUTAGENESIS OF GLN-321</scope>
</reference>
<protein>
    <recommendedName>
        <fullName>Homeobox protein Hox-D13</fullName>
    </recommendedName>
    <alternativeName>
        <fullName>Homeobox protein Hox-4.8</fullName>
    </alternativeName>
</protein>
<evidence type="ECO:0000250" key="1">
    <source>
        <dbReference type="UniProtKB" id="P24344"/>
    </source>
</evidence>
<evidence type="ECO:0000255" key="2">
    <source>
        <dbReference type="PROSITE-ProRule" id="PRU00108"/>
    </source>
</evidence>
<evidence type="ECO:0000256" key="3">
    <source>
        <dbReference type="SAM" id="MobiDB-lite"/>
    </source>
</evidence>
<evidence type="ECO:0000269" key="4">
    <source>
    </source>
</evidence>
<evidence type="ECO:0000305" key="5"/>
<evidence type="ECO:0000305" key="6">
    <source>
    </source>
</evidence>
<feature type="chain" id="PRO_0000200245" description="Homeobox protein Hox-D13">
    <location>
        <begin position="1"/>
        <end position="339"/>
    </location>
</feature>
<feature type="DNA-binding region" description="Homeobox" evidence="2">
    <location>
        <begin position="272"/>
        <end position="331"/>
    </location>
</feature>
<feature type="region of interest" description="Disordered" evidence="3">
    <location>
        <begin position="1"/>
        <end position="33"/>
    </location>
</feature>
<feature type="compositionally biased region" description="Low complexity" evidence="3">
    <location>
        <begin position="20"/>
        <end position="33"/>
    </location>
</feature>
<feature type="mutagenesis site" description="Changes the specificity for binding motifs in promoters. Recognizes the PITX1 consensus DNA-binding sites and triggers the expression of a gene pattern similar to PITX1." evidence="4">
    <original>Q</original>
    <variation>K</variation>
    <location>
        <position position="321"/>
    </location>
</feature>
<feature type="mutagenesis site" description="Changes the function in transcription regulation." evidence="4">
    <original>Q</original>
    <variation>R</variation>
    <location>
        <position position="321"/>
    </location>
</feature>
<feature type="sequence conflict" description="In Ref. 3; BC109143." evidence="5" ref="3">
    <original>M</original>
    <variation>I</variation>
    <location>
        <position position="9"/>
    </location>
</feature>
<feature type="sequence conflict" description="In Ref. 1; CAA67675." evidence="5" ref="1">
    <original>S</original>
    <variation>T</variation>
    <location>
        <position position="69"/>
    </location>
</feature>
<feature type="sequence conflict" description="In Ref. 4; AAB21366." evidence="5" ref="4">
    <original>R</original>
    <variation>T</variation>
    <location>
        <position position="304"/>
    </location>
</feature>
<feature type="sequence conflict" description="In Ref. 4; AAB21366." evidence="5" ref="4">
    <original>A</original>
    <variation>R</variation>
    <location>
        <position position="307"/>
    </location>
</feature>
<comment type="function">
    <text evidence="1 4">Sequence-specific transcription factor that binds gene promoters and activates their transcription (PubMed:23995701). Part of a developmental regulatory system that provides cells with specific positional identities on the anterior-posterior axis (By similarity).</text>
</comment>
<comment type="subcellular location">
    <subcellularLocation>
        <location evidence="6">Nucleus</location>
    </subcellularLocation>
</comment>
<comment type="similarity">
    <text evidence="5">Belongs to the Abd-B homeobox family.</text>
</comment>
<comment type="caution">
    <text evidence="5">It is uncertain whether Met-1 or Met-9 is the initiator.</text>
</comment>
<accession>P70217</accession>
<accession>A2ASM5</accession>
<accession>Q2VPB0</accession>
<accession>Q2VPB1</accession>
<accession>Q64177</accession>
<proteinExistence type="evidence at protein level"/>
<keyword id="KW-0217">Developmental protein</keyword>
<keyword id="KW-0238">DNA-binding</keyword>
<keyword id="KW-0371">Homeobox</keyword>
<keyword id="KW-0539">Nucleus</keyword>
<keyword id="KW-1185">Reference proteome</keyword>
<keyword id="KW-0804">Transcription</keyword>
<keyword id="KW-0805">Transcription regulation</keyword>
<sequence>MSRSGTWDMDGLRADGGAAGAAPASSSSSVAAPGQCRGFLSAPVFAGTHSGRAAAAAAAAAAAAAAASSFAYPGTSERTGSSSSSSSSAVIATRPEAPVAKECPAPAAAATAAAPPGAPALGYGYHFGNGYYSCRMSHGVGLQQNALKSSPHASLGGFPVEKYMDVSGLASSSVPTNEVPARAKEVSFYQGYTSPYQHVPGYIDMVSTFGSGEPRHEAYISMEGYQSWTLANGWNSQVYCAKDQPQGSHFWKSSFPGDVALNQPDMCVYRRGRKKRVPYTKLQLKELENEYAINKFINKDKRRRISAATNLSERQVTIWFQNRRVKDKKIVSKLKDTVS</sequence>